<accession>A6QHX6</accession>
<gene>
    <name evidence="1" type="primary">menE</name>
    <name type="ordered locus">NWMN_1686</name>
</gene>
<name>MENE_STAAE</name>
<dbReference type="EC" id="6.2.1.26" evidence="1"/>
<dbReference type="EMBL" id="AP009351">
    <property type="protein sequence ID" value="BAF67958.1"/>
    <property type="molecule type" value="Genomic_DNA"/>
</dbReference>
<dbReference type="RefSeq" id="WP_000348360.1">
    <property type="nucleotide sequence ID" value="NZ_JBBIAE010000017.1"/>
</dbReference>
<dbReference type="SMR" id="A6QHX6"/>
<dbReference type="KEGG" id="sae:NWMN_1686"/>
<dbReference type="HOGENOM" id="CLU_000022_59_0_9"/>
<dbReference type="UniPathway" id="UPA00079"/>
<dbReference type="UniPathway" id="UPA01057">
    <property type="reaction ID" value="UER00166"/>
</dbReference>
<dbReference type="Proteomes" id="UP000006386">
    <property type="component" value="Chromosome"/>
</dbReference>
<dbReference type="GO" id="GO:0005524">
    <property type="term" value="F:ATP binding"/>
    <property type="evidence" value="ECO:0007669"/>
    <property type="project" value="UniProtKB-KW"/>
</dbReference>
<dbReference type="GO" id="GO:0008756">
    <property type="term" value="F:o-succinylbenzoate-CoA ligase activity"/>
    <property type="evidence" value="ECO:0007669"/>
    <property type="project" value="UniProtKB-UniRule"/>
</dbReference>
<dbReference type="GO" id="GO:0009234">
    <property type="term" value="P:menaquinone biosynthetic process"/>
    <property type="evidence" value="ECO:0007669"/>
    <property type="project" value="UniProtKB-UniRule"/>
</dbReference>
<dbReference type="CDD" id="cd05912">
    <property type="entry name" value="OSB_CoA_lg"/>
    <property type="match status" value="1"/>
</dbReference>
<dbReference type="Gene3D" id="3.30.300.30">
    <property type="match status" value="1"/>
</dbReference>
<dbReference type="Gene3D" id="3.40.50.12780">
    <property type="entry name" value="N-terminal domain of ligase-like"/>
    <property type="match status" value="1"/>
</dbReference>
<dbReference type="HAMAP" id="MF_00731">
    <property type="entry name" value="MenE"/>
    <property type="match status" value="1"/>
</dbReference>
<dbReference type="InterPro" id="IPR025110">
    <property type="entry name" value="AMP-bd_C"/>
</dbReference>
<dbReference type="InterPro" id="IPR045851">
    <property type="entry name" value="AMP-bd_C_sf"/>
</dbReference>
<dbReference type="InterPro" id="IPR000873">
    <property type="entry name" value="AMP-dep_synth/lig_dom"/>
</dbReference>
<dbReference type="InterPro" id="IPR042099">
    <property type="entry name" value="ANL_N_sf"/>
</dbReference>
<dbReference type="InterPro" id="IPR050237">
    <property type="entry name" value="ATP-dep_AMP-bd_enzyme"/>
</dbReference>
<dbReference type="InterPro" id="IPR010192">
    <property type="entry name" value="MenE"/>
</dbReference>
<dbReference type="NCBIfam" id="TIGR01923">
    <property type="entry name" value="menE"/>
    <property type="match status" value="1"/>
</dbReference>
<dbReference type="PANTHER" id="PTHR43767">
    <property type="entry name" value="LONG-CHAIN-FATTY-ACID--COA LIGASE"/>
    <property type="match status" value="1"/>
</dbReference>
<dbReference type="PANTHER" id="PTHR43767:SF1">
    <property type="entry name" value="NONRIBOSOMAL PEPTIDE SYNTHASE PES1 (EUROFUNG)-RELATED"/>
    <property type="match status" value="1"/>
</dbReference>
<dbReference type="Pfam" id="PF00501">
    <property type="entry name" value="AMP-binding"/>
    <property type="match status" value="1"/>
</dbReference>
<dbReference type="Pfam" id="PF13193">
    <property type="entry name" value="AMP-binding_C"/>
    <property type="match status" value="1"/>
</dbReference>
<dbReference type="SUPFAM" id="SSF56801">
    <property type="entry name" value="Acetyl-CoA synthetase-like"/>
    <property type="match status" value="1"/>
</dbReference>
<feature type="chain" id="PRO_1000072786" description="2-succinylbenzoate--CoA ligase">
    <location>
        <begin position="1"/>
        <end position="492"/>
    </location>
</feature>
<keyword id="KW-0067">ATP-binding</keyword>
<keyword id="KW-0436">Ligase</keyword>
<keyword id="KW-0474">Menaquinone biosynthesis</keyword>
<keyword id="KW-0547">Nucleotide-binding</keyword>
<comment type="function">
    <text evidence="1">Converts 2-succinylbenzoate (OSB) to 2-succinylbenzoyl-CoA (OSB-CoA).</text>
</comment>
<comment type="catalytic activity">
    <reaction evidence="1">
        <text>2-succinylbenzoate + ATP + CoA = 2-succinylbenzoyl-CoA + AMP + diphosphate</text>
        <dbReference type="Rhea" id="RHEA:17009"/>
        <dbReference type="ChEBI" id="CHEBI:18325"/>
        <dbReference type="ChEBI" id="CHEBI:30616"/>
        <dbReference type="ChEBI" id="CHEBI:33019"/>
        <dbReference type="ChEBI" id="CHEBI:57287"/>
        <dbReference type="ChEBI" id="CHEBI:57364"/>
        <dbReference type="ChEBI" id="CHEBI:456215"/>
        <dbReference type="EC" id="6.2.1.26"/>
    </reaction>
</comment>
<comment type="pathway">
    <text evidence="1">Quinol/quinone metabolism; 1,4-dihydroxy-2-naphthoate biosynthesis; 1,4-dihydroxy-2-naphthoate from chorismate: step 5/7.</text>
</comment>
<comment type="pathway">
    <text evidence="1">Quinol/quinone metabolism; menaquinone biosynthesis.</text>
</comment>
<comment type="similarity">
    <text evidence="1">Belongs to the ATP-dependent AMP-binding enzyme family. MenE subfamily.</text>
</comment>
<organism>
    <name type="scientific">Staphylococcus aureus (strain Newman)</name>
    <dbReference type="NCBI Taxonomy" id="426430"/>
    <lineage>
        <taxon>Bacteria</taxon>
        <taxon>Bacillati</taxon>
        <taxon>Bacillota</taxon>
        <taxon>Bacilli</taxon>
        <taxon>Bacillales</taxon>
        <taxon>Staphylococcaceae</taxon>
        <taxon>Staphylococcus</taxon>
    </lineage>
</organism>
<reference key="1">
    <citation type="journal article" date="2008" name="J. Bacteriol.">
        <title>Genome sequence of Staphylococcus aureus strain Newman and comparative analysis of staphylococcal genomes: polymorphism and evolution of two major pathogenicity islands.</title>
        <authorList>
            <person name="Baba T."/>
            <person name="Bae T."/>
            <person name="Schneewind O."/>
            <person name="Takeuchi F."/>
            <person name="Hiramatsu K."/>
        </authorList>
    </citation>
    <scope>NUCLEOTIDE SEQUENCE [LARGE SCALE GENOMIC DNA]</scope>
    <source>
        <strain>Newman</strain>
    </source>
</reference>
<sequence>MDFWLYKQAQQNGHHIAITDGQESYTYQNLYCEASLLAKRLKAYQQSRVGLYIDNSIQSIILIHACWLANIEIAMINTRLTPNEMTNQMKSIDVQLIFCTLPLELRGFQIVSLDDIEFAGRDITTNSLLDNTMGIQYETSNETVVPKESPSNILNTSFNLDDIASIMFTSGTTGPQKAVPQTFRNHYASAIGCKESLGFDRDTNWLSVLPIYHISGLSVLLRAVIEGFTVRIVDKFNAEQILTMIKNERITHISLVPQTLNWLMQQGLHEPYNLQKILLGGAKLSATMIETALQYNLPIYNSFGMTETCSQFLTATPEMLHARPDTVGMPSANVDVKIKNPNKEGHGELMIKGANVMNVYLYPTDLTGTFENGYFNTGDIAEIDHEGYVMIYDRRKDLIISGGENIYPYQIETVAKQFPGISDAVCVGHPDDTWGQVPKLYFVSESDISKAQLIAYLSQHLAKYKVPKHFEKVDTLPYTSTGKLQRNKLYRG</sequence>
<proteinExistence type="inferred from homology"/>
<evidence type="ECO:0000255" key="1">
    <source>
        <dbReference type="HAMAP-Rule" id="MF_00731"/>
    </source>
</evidence>
<protein>
    <recommendedName>
        <fullName evidence="1">2-succinylbenzoate--CoA ligase</fullName>
        <ecNumber evidence="1">6.2.1.26</ecNumber>
    </recommendedName>
    <alternativeName>
        <fullName evidence="1">o-succinylbenzoyl-CoA synthetase</fullName>
        <shortName evidence="1">OSB-CoA synthetase</shortName>
    </alternativeName>
</protein>